<organism>
    <name type="scientific">Saccharolobus islandicus (strain Y.N.15.51 / Yellowstone #2)</name>
    <name type="common">Sulfolobus islandicus</name>
    <dbReference type="NCBI Taxonomy" id="419942"/>
    <lineage>
        <taxon>Archaea</taxon>
        <taxon>Thermoproteota</taxon>
        <taxon>Thermoprotei</taxon>
        <taxon>Sulfolobales</taxon>
        <taxon>Sulfolobaceae</taxon>
        <taxon>Saccharolobus</taxon>
    </lineage>
</organism>
<comment type="function">
    <text evidence="1">DNA-dependent RNA polymerase (RNAP) catalyzes the transcription of DNA into RNA using the four ribonucleoside triphosphates as substrates. Forms part of the jaw domain.</text>
</comment>
<comment type="catalytic activity">
    <reaction evidence="1">
        <text>RNA(n) + a ribonucleoside 5'-triphosphate = RNA(n+1) + diphosphate</text>
        <dbReference type="Rhea" id="RHEA:21248"/>
        <dbReference type="Rhea" id="RHEA-COMP:14527"/>
        <dbReference type="Rhea" id="RHEA-COMP:17342"/>
        <dbReference type="ChEBI" id="CHEBI:33019"/>
        <dbReference type="ChEBI" id="CHEBI:61557"/>
        <dbReference type="ChEBI" id="CHEBI:140395"/>
        <dbReference type="EC" id="2.7.7.6"/>
    </reaction>
</comment>
<comment type="subunit">
    <text evidence="1">Part of the RNA polymerase complex.</text>
</comment>
<comment type="subcellular location">
    <subcellularLocation>
        <location evidence="1">Cytoplasm</location>
    </subcellularLocation>
</comment>
<comment type="similarity">
    <text evidence="1">Belongs to the RNA polymerase beta' chain family.</text>
</comment>
<gene>
    <name evidence="1" type="primary">rpo1C</name>
    <name evidence="1" type="synonym">rpoA2</name>
    <name type="ordered locus">YN1551_0931</name>
</gene>
<protein>
    <recommendedName>
        <fullName evidence="1">DNA-directed RNA polymerase subunit Rpo1C</fullName>
        <ecNumber evidence="1">2.7.7.6</ecNumber>
    </recommendedName>
    <alternativeName>
        <fullName evidence="1">DNA-directed RNA polymerase subunit A''</fullName>
    </alternativeName>
</protein>
<sequence length="392" mass="43390">MIDEKDKSYLEEKVKQASNILPQKIVEDLKNLISNKEVLVTRDEIDKIFDLAIKEYSEGLIAPGEAIGIVAAQSVGEPGTQMTLRTFHFAGIRELNVTLGLPRLIEIVDAKKVPSTPMMTIYLTDEYKHDKEKALEVARKLEYTKIENVVSSTSIDIASMSIILQLDNEMLKDKGVTVDDVKKAINRLKLGEFVIDESEGNTLNISFANIDSIAALFKLRDKILNTKIKGIKGIKRAIVQKKGDEYIILTDGSNLSGVLSVKGVDIAKVETNNIREIEEVFGIEAAREIIIREISKVLAEQGLDVDMRHILLVADVMTRTGVVRQIGRHGVTGEKNSVLARAAFEVTVKHLLDAAARGDVEEFKGVVENIIIGHPIKLGTGMVELTMRPILR</sequence>
<accession>C3NFS2</accession>
<feature type="chain" id="PRO_1000205987" description="DNA-directed RNA polymerase subunit Rpo1C">
    <location>
        <begin position="1"/>
        <end position="392"/>
    </location>
</feature>
<evidence type="ECO:0000255" key="1">
    <source>
        <dbReference type="HAMAP-Rule" id="MF_00411"/>
    </source>
</evidence>
<proteinExistence type="inferred from homology"/>
<reference key="1">
    <citation type="journal article" date="2009" name="Proc. Natl. Acad. Sci. U.S.A.">
        <title>Biogeography of the Sulfolobus islandicus pan-genome.</title>
        <authorList>
            <person name="Reno M.L."/>
            <person name="Held N.L."/>
            <person name="Fields C.J."/>
            <person name="Burke P.V."/>
            <person name="Whitaker R.J."/>
        </authorList>
    </citation>
    <scope>NUCLEOTIDE SEQUENCE [LARGE SCALE GENOMIC DNA]</scope>
    <source>
        <strain>Y.N.15.51 / Yellowstone #2</strain>
    </source>
</reference>
<dbReference type="EC" id="2.7.7.6" evidence="1"/>
<dbReference type="EMBL" id="CP001404">
    <property type="protein sequence ID" value="ACP48040.1"/>
    <property type="molecule type" value="Genomic_DNA"/>
</dbReference>
<dbReference type="RefSeq" id="WP_012711886.1">
    <property type="nucleotide sequence ID" value="NC_012623.1"/>
</dbReference>
<dbReference type="SMR" id="C3NFS2"/>
<dbReference type="GeneID" id="84062225"/>
<dbReference type="KEGG" id="sin:YN1551_0931"/>
<dbReference type="HOGENOM" id="CLU_037097_1_0_2"/>
<dbReference type="Proteomes" id="UP000006818">
    <property type="component" value="Chromosome"/>
</dbReference>
<dbReference type="GO" id="GO:0005737">
    <property type="term" value="C:cytoplasm"/>
    <property type="evidence" value="ECO:0007669"/>
    <property type="project" value="UniProtKB-SubCell"/>
</dbReference>
<dbReference type="GO" id="GO:0000428">
    <property type="term" value="C:DNA-directed RNA polymerase complex"/>
    <property type="evidence" value="ECO:0007669"/>
    <property type="project" value="UniProtKB-KW"/>
</dbReference>
<dbReference type="GO" id="GO:0003677">
    <property type="term" value="F:DNA binding"/>
    <property type="evidence" value="ECO:0007669"/>
    <property type="project" value="UniProtKB-UniRule"/>
</dbReference>
<dbReference type="GO" id="GO:0003899">
    <property type="term" value="F:DNA-directed RNA polymerase activity"/>
    <property type="evidence" value="ECO:0007669"/>
    <property type="project" value="UniProtKB-UniRule"/>
</dbReference>
<dbReference type="GO" id="GO:0006351">
    <property type="term" value="P:DNA-templated transcription"/>
    <property type="evidence" value="ECO:0007669"/>
    <property type="project" value="UniProtKB-UniRule"/>
</dbReference>
<dbReference type="CDD" id="cd06528">
    <property type="entry name" value="RNAP_A"/>
    <property type="match status" value="1"/>
</dbReference>
<dbReference type="Gene3D" id="1.10.150.390">
    <property type="match status" value="1"/>
</dbReference>
<dbReference type="HAMAP" id="MF_00411">
    <property type="entry name" value="RNApol_arch_Rpo1C"/>
    <property type="match status" value="1"/>
</dbReference>
<dbReference type="InterPro" id="IPR045867">
    <property type="entry name" value="DNA-dir_RpoC_beta_prime"/>
</dbReference>
<dbReference type="InterPro" id="IPR007081">
    <property type="entry name" value="RNA_pol_Rpb1_5"/>
</dbReference>
<dbReference type="InterPro" id="IPR012757">
    <property type="entry name" value="RPO1C"/>
</dbReference>
<dbReference type="NCBIfam" id="TIGR02389">
    <property type="entry name" value="RNA_pol_rpoA2"/>
    <property type="match status" value="1"/>
</dbReference>
<dbReference type="PANTHER" id="PTHR19376">
    <property type="entry name" value="DNA-DIRECTED RNA POLYMERASE"/>
    <property type="match status" value="1"/>
</dbReference>
<dbReference type="PANTHER" id="PTHR19376:SF32">
    <property type="entry name" value="DNA-DIRECTED RNA POLYMERASE III SUBUNIT RPC1"/>
    <property type="match status" value="1"/>
</dbReference>
<dbReference type="Pfam" id="PF04998">
    <property type="entry name" value="RNA_pol_Rpb1_5"/>
    <property type="match status" value="1"/>
</dbReference>
<dbReference type="SUPFAM" id="SSF64484">
    <property type="entry name" value="beta and beta-prime subunits of DNA dependent RNA-polymerase"/>
    <property type="match status" value="1"/>
</dbReference>
<keyword id="KW-0963">Cytoplasm</keyword>
<keyword id="KW-0238">DNA-binding</keyword>
<keyword id="KW-0240">DNA-directed RNA polymerase</keyword>
<keyword id="KW-0548">Nucleotidyltransferase</keyword>
<keyword id="KW-0804">Transcription</keyword>
<keyword id="KW-0808">Transferase</keyword>
<name>RPO1C_SACI1</name>